<reference key="1">
    <citation type="journal article" date="2005" name="Science">
        <title>The transcriptional landscape of the mammalian genome.</title>
        <authorList>
            <person name="Carninci P."/>
            <person name="Kasukawa T."/>
            <person name="Katayama S."/>
            <person name="Gough J."/>
            <person name="Frith M.C."/>
            <person name="Maeda N."/>
            <person name="Oyama R."/>
            <person name="Ravasi T."/>
            <person name="Lenhard B."/>
            <person name="Wells C."/>
            <person name="Kodzius R."/>
            <person name="Shimokawa K."/>
            <person name="Bajic V.B."/>
            <person name="Brenner S.E."/>
            <person name="Batalov S."/>
            <person name="Forrest A.R."/>
            <person name="Zavolan M."/>
            <person name="Davis M.J."/>
            <person name="Wilming L.G."/>
            <person name="Aidinis V."/>
            <person name="Allen J.E."/>
            <person name="Ambesi-Impiombato A."/>
            <person name="Apweiler R."/>
            <person name="Aturaliya R.N."/>
            <person name="Bailey T.L."/>
            <person name="Bansal M."/>
            <person name="Baxter L."/>
            <person name="Beisel K.W."/>
            <person name="Bersano T."/>
            <person name="Bono H."/>
            <person name="Chalk A.M."/>
            <person name="Chiu K.P."/>
            <person name="Choudhary V."/>
            <person name="Christoffels A."/>
            <person name="Clutterbuck D.R."/>
            <person name="Crowe M.L."/>
            <person name="Dalla E."/>
            <person name="Dalrymple B.P."/>
            <person name="de Bono B."/>
            <person name="Della Gatta G."/>
            <person name="di Bernardo D."/>
            <person name="Down T."/>
            <person name="Engstrom P."/>
            <person name="Fagiolini M."/>
            <person name="Faulkner G."/>
            <person name="Fletcher C.F."/>
            <person name="Fukushima T."/>
            <person name="Furuno M."/>
            <person name="Futaki S."/>
            <person name="Gariboldi M."/>
            <person name="Georgii-Hemming P."/>
            <person name="Gingeras T.R."/>
            <person name="Gojobori T."/>
            <person name="Green R.E."/>
            <person name="Gustincich S."/>
            <person name="Harbers M."/>
            <person name="Hayashi Y."/>
            <person name="Hensch T.K."/>
            <person name="Hirokawa N."/>
            <person name="Hill D."/>
            <person name="Huminiecki L."/>
            <person name="Iacono M."/>
            <person name="Ikeo K."/>
            <person name="Iwama A."/>
            <person name="Ishikawa T."/>
            <person name="Jakt M."/>
            <person name="Kanapin A."/>
            <person name="Katoh M."/>
            <person name="Kawasawa Y."/>
            <person name="Kelso J."/>
            <person name="Kitamura H."/>
            <person name="Kitano H."/>
            <person name="Kollias G."/>
            <person name="Krishnan S.P."/>
            <person name="Kruger A."/>
            <person name="Kummerfeld S.K."/>
            <person name="Kurochkin I.V."/>
            <person name="Lareau L.F."/>
            <person name="Lazarevic D."/>
            <person name="Lipovich L."/>
            <person name="Liu J."/>
            <person name="Liuni S."/>
            <person name="McWilliam S."/>
            <person name="Madan Babu M."/>
            <person name="Madera M."/>
            <person name="Marchionni L."/>
            <person name="Matsuda H."/>
            <person name="Matsuzawa S."/>
            <person name="Miki H."/>
            <person name="Mignone F."/>
            <person name="Miyake S."/>
            <person name="Morris K."/>
            <person name="Mottagui-Tabar S."/>
            <person name="Mulder N."/>
            <person name="Nakano N."/>
            <person name="Nakauchi H."/>
            <person name="Ng P."/>
            <person name="Nilsson R."/>
            <person name="Nishiguchi S."/>
            <person name="Nishikawa S."/>
            <person name="Nori F."/>
            <person name="Ohara O."/>
            <person name="Okazaki Y."/>
            <person name="Orlando V."/>
            <person name="Pang K.C."/>
            <person name="Pavan W.J."/>
            <person name="Pavesi G."/>
            <person name="Pesole G."/>
            <person name="Petrovsky N."/>
            <person name="Piazza S."/>
            <person name="Reed J."/>
            <person name="Reid J.F."/>
            <person name="Ring B.Z."/>
            <person name="Ringwald M."/>
            <person name="Rost B."/>
            <person name="Ruan Y."/>
            <person name="Salzberg S.L."/>
            <person name="Sandelin A."/>
            <person name="Schneider C."/>
            <person name="Schoenbach C."/>
            <person name="Sekiguchi K."/>
            <person name="Semple C.A."/>
            <person name="Seno S."/>
            <person name="Sessa L."/>
            <person name="Sheng Y."/>
            <person name="Shibata Y."/>
            <person name="Shimada H."/>
            <person name="Shimada K."/>
            <person name="Silva D."/>
            <person name="Sinclair B."/>
            <person name="Sperling S."/>
            <person name="Stupka E."/>
            <person name="Sugiura K."/>
            <person name="Sultana R."/>
            <person name="Takenaka Y."/>
            <person name="Taki K."/>
            <person name="Tammoja K."/>
            <person name="Tan S.L."/>
            <person name="Tang S."/>
            <person name="Taylor M.S."/>
            <person name="Tegner J."/>
            <person name="Teichmann S.A."/>
            <person name="Ueda H.R."/>
            <person name="van Nimwegen E."/>
            <person name="Verardo R."/>
            <person name="Wei C.L."/>
            <person name="Yagi K."/>
            <person name="Yamanishi H."/>
            <person name="Zabarovsky E."/>
            <person name="Zhu S."/>
            <person name="Zimmer A."/>
            <person name="Hide W."/>
            <person name="Bult C."/>
            <person name="Grimmond S.M."/>
            <person name="Teasdale R.D."/>
            <person name="Liu E.T."/>
            <person name="Brusic V."/>
            <person name="Quackenbush J."/>
            <person name="Wahlestedt C."/>
            <person name="Mattick J.S."/>
            <person name="Hume D.A."/>
            <person name="Kai C."/>
            <person name="Sasaki D."/>
            <person name="Tomaru Y."/>
            <person name="Fukuda S."/>
            <person name="Kanamori-Katayama M."/>
            <person name="Suzuki M."/>
            <person name="Aoki J."/>
            <person name="Arakawa T."/>
            <person name="Iida J."/>
            <person name="Imamura K."/>
            <person name="Itoh M."/>
            <person name="Kato T."/>
            <person name="Kawaji H."/>
            <person name="Kawagashira N."/>
            <person name="Kawashima T."/>
            <person name="Kojima M."/>
            <person name="Kondo S."/>
            <person name="Konno H."/>
            <person name="Nakano K."/>
            <person name="Ninomiya N."/>
            <person name="Nishio T."/>
            <person name="Okada M."/>
            <person name="Plessy C."/>
            <person name="Shibata K."/>
            <person name="Shiraki T."/>
            <person name="Suzuki S."/>
            <person name="Tagami M."/>
            <person name="Waki K."/>
            <person name="Watahiki A."/>
            <person name="Okamura-Oho Y."/>
            <person name="Suzuki H."/>
            <person name="Kawai J."/>
            <person name="Hayashizaki Y."/>
        </authorList>
    </citation>
    <scope>NUCLEOTIDE SEQUENCE [LARGE SCALE MRNA]</scope>
    <source>
        <strain>C57BL/6J</strain>
        <tissue>Embryo</tissue>
        <tissue>Spinal cord</tissue>
    </source>
</reference>
<reference key="2">
    <citation type="journal article" date="2004" name="Genome Res.">
        <title>The status, quality, and expansion of the NIH full-length cDNA project: the Mammalian Gene Collection (MGC).</title>
        <authorList>
            <consortium name="The MGC Project Team"/>
        </authorList>
    </citation>
    <scope>NUCLEOTIDE SEQUENCE [LARGE SCALE MRNA]</scope>
    <source>
        <strain>C57BL/6J</strain>
        <tissue>Mammary gland</tissue>
    </source>
</reference>
<reference key="3">
    <citation type="journal article" date="1998" name="Genes Dev.">
        <title>The Elongin BC complex interacts with the conserved SOCS-box motif present in members of the SOCS, ras, WD-40 repeat, and ankyrin repeat families.</title>
        <authorList>
            <person name="Kamura T."/>
            <person name="Sato S."/>
            <person name="Haque D."/>
            <person name="Liu L."/>
            <person name="Kaelin W.G. Jr."/>
            <person name="Conaway R.C."/>
            <person name="Conaway J.W."/>
        </authorList>
    </citation>
    <scope>INTERACTION WITH SOCS1</scope>
</reference>
<reference key="4">
    <citation type="journal article" date="1999" name="Proc. Natl. Acad. Sci. U.S.A.">
        <title>The conserved SOCS box motif in suppressors of cytokine signaling binds to elongins B and C and may couple bound proteins to proteasomal degradation.</title>
        <authorList>
            <person name="Zhang J.-G."/>
            <person name="Farley A."/>
            <person name="Nicholson S.E."/>
            <person name="Willson T.A."/>
            <person name="Zugaro L.M."/>
            <person name="Simpson R.J."/>
            <person name="Moritz R.L."/>
            <person name="Cary D."/>
            <person name="Richardson R."/>
            <person name="Hausmann G."/>
            <person name="Kile B.J."/>
            <person name="Kent S.B.H."/>
            <person name="Alexander W.S."/>
            <person name="Metcalf D."/>
            <person name="Hilton D.J."/>
            <person name="Nicola N.A."/>
            <person name="Baca M."/>
        </authorList>
    </citation>
    <scope>INTERACTION WITH SOCS1</scope>
</reference>
<reference key="5">
    <citation type="journal article" date="2001" name="J. Biol. Chem.">
        <title>Muf1, a novel elongin BC-interacting leucine-rich repeat protein that can assemble with Cul5 and Rbx1 to reconstitute a ubiquitin ligase.</title>
        <authorList>
            <person name="Kamura T."/>
            <person name="Burian D."/>
            <person name="Yan Q."/>
            <person name="Schmidt S.L."/>
            <person name="Lane W.S."/>
            <person name="Querido E."/>
            <person name="Branton P.E."/>
            <person name="Shilatifard A."/>
            <person name="Conaway R.C."/>
            <person name="Conaway J.W."/>
        </authorList>
    </citation>
    <scope>IDENTIFICATION IN E3 UBIQUITIN LIGASE COMPLEXES</scope>
</reference>
<reference key="6">
    <citation type="journal article" date="2010" name="Cell">
        <title>A tissue-specific atlas of mouse protein phosphorylation and expression.</title>
        <authorList>
            <person name="Huttlin E.L."/>
            <person name="Jedrychowski M.P."/>
            <person name="Elias J.E."/>
            <person name="Goswami T."/>
            <person name="Rad R."/>
            <person name="Beausoleil S.A."/>
            <person name="Villen J."/>
            <person name="Haas W."/>
            <person name="Sowa M.E."/>
            <person name="Gygi S.P."/>
        </authorList>
    </citation>
    <scope>IDENTIFICATION BY MASS SPECTROMETRY [LARGE SCALE ANALYSIS]</scope>
    <source>
        <tissue>Brain</tissue>
        <tissue>Brown adipose tissue</tissue>
        <tissue>Heart</tissue>
        <tissue>Kidney</tissue>
        <tissue>Liver</tissue>
        <tissue>Lung</tissue>
        <tissue>Pancreas</tissue>
        <tissue>Spleen</tissue>
        <tissue>Testis</tissue>
    </source>
</reference>
<reference key="7">
    <citation type="journal article" date="2016" name="Mol. Cell">
        <title>EPOP functionally links elongin and Polycomb in pluripotent stem cells.</title>
        <authorList>
            <person name="Beringer M."/>
            <person name="Pisano P."/>
            <person name="Di Carlo V."/>
            <person name="Blanco E."/>
            <person name="Chammas P."/>
            <person name="Vizan P."/>
            <person name="Gutierrez A."/>
            <person name="Aranda S."/>
            <person name="Payer B."/>
            <person name="Wierer M."/>
            <person name="Di Croce L."/>
        </authorList>
    </citation>
    <scope>FUNCTION</scope>
    <scope>INTERACTION WITH EPOP</scope>
</reference>
<reference key="8">
    <citation type="journal article" date="2016" name="Mol. Cell">
        <title>EPOP interacts with elongin BC and USP7 to modulate the chromatin landscape.</title>
        <authorList>
            <person name="Liefke R."/>
            <person name="Karwacki-Neisius V."/>
            <person name="Shi Y."/>
        </authorList>
    </citation>
    <scope>FUNCTION</scope>
    <scope>INTERACTION WITH EPOP</scope>
</reference>
<reference key="9">
    <citation type="journal article" date="2017" name="Mol. Cell">
        <authorList>
            <person name="Liefke R."/>
            <person name="Karwacki-Neisius V."/>
            <person name="Shi Y."/>
        </authorList>
    </citation>
    <scope>ERRATUM OF PUBMED:27863226</scope>
</reference>
<reference key="10">
    <citation type="journal article" date="2021" name="EMBO Rep.">
        <title>CUL2LRR1, TRAIP and p97 control CMG helicase disassembly in the mammalian cell cycle.</title>
        <authorList>
            <person name="Villa F."/>
            <person name="Fujisawa R."/>
            <person name="Ainsworth J."/>
            <person name="Nishimura K."/>
            <person name="Lie-A-Ling M."/>
            <person name="Lacaud G."/>
            <person name="Labib K.P."/>
        </authorList>
    </citation>
    <scope>FUNCTION</scope>
    <scope>SUBUNIT</scope>
    <scope>SUBCELLULAR LOCATION</scope>
</reference>
<reference key="11">
    <citation type="journal article" date="2006" name="EMBO J.">
        <title>Structural and functional insights into the B30.2/SPRY domain.</title>
        <authorList>
            <person name="Woo J.S."/>
            <person name="Imm J.H."/>
            <person name="Min C.K."/>
            <person name="Kim K.J."/>
            <person name="Cha S.S."/>
            <person name="Oh B.H."/>
        </authorList>
    </citation>
    <scope>X-RAY CRYSTALLOGRAPHY (1.80 ANGSTROMS) OF 17-112 IN COMPLEX WITH ELONGIN B AND DROSOPHILA GUS</scope>
</reference>
<reference evidence="12" key="12">
    <citation type="journal article" date="2013" name="Acta Crystallogr. D">
        <title>Structural basis of intersubunit recognition in elongin BC-cullin 5-SOCS box ubiquitin-protein ligase complexes.</title>
        <authorList>
            <person name="Kim Y.K."/>
            <person name="Kwak M.J."/>
            <person name="Ku B."/>
            <person name="Suh H.Y."/>
            <person name="Joo K."/>
            <person name="Lee J."/>
            <person name="Jung J.U."/>
            <person name="Oh B.H."/>
        </authorList>
    </citation>
    <scope>X-RAY CRYSTALLOGRAPHY (3.00 ANGSTROMS) OF 17-112 IN COMPLEX WITH CUL5; ELOB AND SOCS2</scope>
</reference>
<sequence length="112" mass="12473">MDGEEKTYGGCEGPDAMYVKLISSDGHEFIVKREHALTSGTIKAMLSGPGQFAENETNEVNFREIPSHVLSKVCMYFTYKVRYTNSSTEIPEFPIAPEIALELLMAANFLDC</sequence>
<comment type="function">
    <text evidence="1 5 6">SIII, also known as elongin, is a general transcription elongation factor that increases the RNA polymerase II transcription elongation past template-encoded arresting sites (By similarity). Subunit A is transcriptionally active and its transcription activity is strongly enhanced by binding to the dimeric complex of the SIII regulatory subunits B and C (elongin BC complex) (By similarity). In embryonic stem cells, the elongin BC complex is recruited by EPOP to Polycomb group (PcG) target genes in order generate genomic region that display both active and repressive chromatin properties, an important feature of pluripotent stem cells (PubMed:27863225, PubMed:27863226).</text>
</comment>
<comment type="function">
    <text evidence="1 7">Core component of multiple cullin-RING-based ECS (ElonginB/C-CUL2/5-SOCS-box protein) E3 ubiquitin-protein ligase complexes, which mediate the ubiquitination of target proteins (PubMed:33590678). By binding to BC-box motifs it seems to link target recruitment subunits, like VHL and members of the SOCS box family, to Cullin/RBX1 modules that activate E2 ubiquitination enzymes (By similarity). Component the von Hippel-Lindau ubiquitination complex CBC(VHL) (By similarity). A number of ECS complexes (containing either KLHDC2, KLHDC3, KLHDC10, APPBP2, FEM1A, FEM1B or FEM1C as substrate-recognition component) are part of the DesCEND (destruction via C-end degrons) pathway, which recognizes a C-degron located at the extreme C terminus of target proteins, leading to their ubiquitination and degradation (By similarity). The ECS(ASB9) complex mediates ubiquitination and degradation of CKB (By similarity). As part of a multisubunit ubiquitin ligase complex, polyubiquitinates monoubiquitinated POLR2A (By similarity). ECS(LRR1) ubiquitinates MCM7 and promotes CMG replisome disassembly by VCP and chromatin extraction during S-phase (PubMed:33590678). As part of the ECS(RAB40C) complex, mediates ANKRD28 ubiquitination and degradation, thereby inhibiting protein phosphatase 6 (PP6) complex activity and focal adhesion assembly during cell migration (By similarity).</text>
</comment>
<comment type="pathway">
    <text evidence="7">Protein modification; protein ubiquitination.</text>
</comment>
<comment type="subunit">
    <text evidence="1 2 3 4 5 6 7 8">Heterotrimer of an A (ELOA, ELOA2 or ELOA3P), ELOB and ELOC subunit (By similarity). The elongin BC complex interacts with EPOP; leading to recruit the elongin BC complex to Polycomb group (PcG) target genes, thereby restricting excessive activity of the PRC2/EED-EZH2 complex (PubMed:27863225, PubMed:27863226). Component of multiple cullin-RING E3 ubiquitin-protein ligase complexes composed of Elongin BC (ELOB and ELOC), a cullin (CUL2 or CUL5), a catalytic subunit (RBX1 or RNF7/RBX2), as well as a substrate adapter protein that can be either ASB2, ASB9, ASB11, KLHDC2, KLHDC3, KLHDC10, APPBP2, FEM1A, FEM1B, FEM1C, LRR1, PCMTD1, SOCS1, SOCS2, SOCS5, SPSB1, SPSB3, ELOA, VHL, WSB1, ZYG11B or RAB40C (PubMed:10051596, PubMed:11384984, PubMed:16498413, PubMed:33590678, PubMed:9869640). Interacts with TMF1. As part of the Elongin BC E3 ubiquitin ligase complex; interacts with NRBP1 (By similarity). May form oligomers as a KLHDC2/KLHDC3-ELOB-ELOC complex; this interaction is autoinhibitory for the E3 ligase complex as the substrate-binding site of KLHDC2/KLHDC3 is blocked in the oligomer (By similarity).</text>
</comment>
<comment type="subcellular location">
    <subcellularLocation>
        <location evidence="10">Nucleus</location>
    </subcellularLocation>
</comment>
<comment type="PTM">
    <text evidence="1">Ubiquitinated by the DCX(AMBRA1) complex, leading to its degradation by the proteasome.</text>
</comment>
<comment type="similarity">
    <text evidence="9">Belongs to the SKP1 family.</text>
</comment>
<proteinExistence type="evidence at protein level"/>
<gene>
    <name evidence="11" type="primary">Eloc</name>
    <name evidence="11" type="synonym">Tceb1</name>
</gene>
<keyword id="KW-0002">3D-structure</keyword>
<keyword id="KW-0539">Nucleus</keyword>
<keyword id="KW-1185">Reference proteome</keyword>
<keyword id="KW-0804">Transcription</keyword>
<keyword id="KW-0805">Transcription regulation</keyword>
<keyword id="KW-0832">Ubl conjugation</keyword>
<keyword id="KW-0833">Ubl conjugation pathway</keyword>
<accession>P83940</accession>
<accession>Q63182</accession>
<evidence type="ECO:0000250" key="1">
    <source>
        <dbReference type="UniProtKB" id="Q15369"/>
    </source>
</evidence>
<evidence type="ECO:0000269" key="2">
    <source>
    </source>
</evidence>
<evidence type="ECO:0000269" key="3">
    <source>
    </source>
</evidence>
<evidence type="ECO:0000269" key="4">
    <source>
    </source>
</evidence>
<evidence type="ECO:0000269" key="5">
    <source>
    </source>
</evidence>
<evidence type="ECO:0000269" key="6">
    <source>
    </source>
</evidence>
<evidence type="ECO:0000269" key="7">
    <source>
    </source>
</evidence>
<evidence type="ECO:0000269" key="8">
    <source>
    </source>
</evidence>
<evidence type="ECO:0000305" key="9"/>
<evidence type="ECO:0000305" key="10">
    <source>
    </source>
</evidence>
<evidence type="ECO:0000312" key="11">
    <source>
        <dbReference type="MGI" id="MGI:1915173"/>
    </source>
</evidence>
<evidence type="ECO:0007744" key="12">
    <source>
        <dbReference type="PDB" id="4JGH"/>
    </source>
</evidence>
<evidence type="ECO:0007829" key="13">
    <source>
        <dbReference type="PDB" id="2FNJ"/>
    </source>
</evidence>
<evidence type="ECO:0007829" key="14">
    <source>
        <dbReference type="PDB" id="2JZ3"/>
    </source>
</evidence>
<evidence type="ECO:0007829" key="15">
    <source>
        <dbReference type="PDB" id="4JGH"/>
    </source>
</evidence>
<dbReference type="EMBL" id="AK013089">
    <property type="protein sequence ID" value="BAB28641.1"/>
    <property type="molecule type" value="mRNA"/>
</dbReference>
<dbReference type="EMBL" id="AK011757">
    <property type="protein sequence ID" value="BAB27825.1"/>
    <property type="molecule type" value="mRNA"/>
</dbReference>
<dbReference type="EMBL" id="AK011958">
    <property type="protein sequence ID" value="BAB27939.1"/>
    <property type="molecule type" value="mRNA"/>
</dbReference>
<dbReference type="EMBL" id="AK012909">
    <property type="protein sequence ID" value="BAB28546.1"/>
    <property type="molecule type" value="mRNA"/>
</dbReference>
<dbReference type="EMBL" id="AK039746">
    <property type="protein sequence ID" value="BAC30437.1"/>
    <property type="molecule type" value="mRNA"/>
</dbReference>
<dbReference type="EMBL" id="BC009104">
    <property type="protein sequence ID" value="AAH09104.1"/>
    <property type="molecule type" value="mRNA"/>
</dbReference>
<dbReference type="EMBL" id="BC028545">
    <property type="protein sequence ID" value="AAH28545.1"/>
    <property type="molecule type" value="mRNA"/>
</dbReference>
<dbReference type="CCDS" id="CCDS35517.1"/>
<dbReference type="RefSeq" id="NP_001297399.1">
    <property type="nucleotide sequence ID" value="NM_001310470.1"/>
</dbReference>
<dbReference type="RefSeq" id="NP_001416944.1">
    <property type="nucleotide sequence ID" value="NM_001430015.1"/>
</dbReference>
<dbReference type="RefSeq" id="NP_001416945.1">
    <property type="nucleotide sequence ID" value="NM_001430016.1"/>
</dbReference>
<dbReference type="RefSeq" id="NP_001416946.1">
    <property type="nucleotide sequence ID" value="NM_001430017.1"/>
</dbReference>
<dbReference type="RefSeq" id="NP_001416947.1">
    <property type="nucleotide sequence ID" value="NM_001430018.1"/>
</dbReference>
<dbReference type="RefSeq" id="NP_001416948.1">
    <property type="nucleotide sequence ID" value="NM_001430019.1"/>
</dbReference>
<dbReference type="RefSeq" id="NP_001416949.1">
    <property type="nucleotide sequence ID" value="NM_001430020.1"/>
</dbReference>
<dbReference type="RefSeq" id="NP_001416950.1">
    <property type="nucleotide sequence ID" value="NM_001430021.1"/>
</dbReference>
<dbReference type="RefSeq" id="NP_001416951.1">
    <property type="nucleotide sequence ID" value="NM_001430022.1"/>
</dbReference>
<dbReference type="RefSeq" id="NP_001416952.1">
    <property type="nucleotide sequence ID" value="NM_001430023.1"/>
</dbReference>
<dbReference type="RefSeq" id="NP_001416953.1">
    <property type="nucleotide sequence ID" value="NM_001430024.1"/>
</dbReference>
<dbReference type="RefSeq" id="NP_001416954.1">
    <property type="nucleotide sequence ID" value="NM_001430025.1"/>
</dbReference>
<dbReference type="RefSeq" id="NP_001416955.1">
    <property type="nucleotide sequence ID" value="NM_001430026.1"/>
</dbReference>
<dbReference type="RefSeq" id="NP_001416957.1">
    <property type="nucleotide sequence ID" value="NM_001430028.1"/>
</dbReference>
<dbReference type="RefSeq" id="NP_001416959.1">
    <property type="nucleotide sequence ID" value="NM_001430030.1"/>
</dbReference>
<dbReference type="RefSeq" id="NP_001416961.1">
    <property type="nucleotide sequence ID" value="NM_001430032.1"/>
</dbReference>
<dbReference type="RefSeq" id="NP_001416962.1">
    <property type="nucleotide sequence ID" value="NM_001430033.1"/>
</dbReference>
<dbReference type="RefSeq" id="NP_080732.1">
    <property type="nucleotide sequence ID" value="NM_026456.5"/>
</dbReference>
<dbReference type="RefSeq" id="XP_006495624.1">
    <property type="nucleotide sequence ID" value="XM_006495561.2"/>
</dbReference>
<dbReference type="RefSeq" id="XP_006495625.1">
    <property type="nucleotide sequence ID" value="XM_006495562.1"/>
</dbReference>
<dbReference type="RefSeq" id="XP_006495626.1">
    <property type="nucleotide sequence ID" value="XM_006495563.3"/>
</dbReference>
<dbReference type="RefSeq" id="XP_006495627.1">
    <property type="nucleotide sequence ID" value="XM_006495564.1"/>
</dbReference>
<dbReference type="RefSeq" id="XP_030098437.1">
    <property type="nucleotide sequence ID" value="XM_030242577.2"/>
</dbReference>
<dbReference type="RefSeq" id="XP_036009132.1">
    <property type="nucleotide sequence ID" value="XM_036153239.1"/>
</dbReference>
<dbReference type="PDB" id="2FNJ">
    <property type="method" value="X-ray"/>
    <property type="resolution" value="1.80 A"/>
    <property type="chains" value="C=17-112"/>
</dbReference>
<dbReference type="PDB" id="2JZ3">
    <property type="method" value="NMR"/>
    <property type="chains" value="C=17-112"/>
</dbReference>
<dbReference type="PDB" id="4JGH">
    <property type="method" value="X-ray"/>
    <property type="resolution" value="3.00 A"/>
    <property type="chains" value="C=17-112"/>
</dbReference>
<dbReference type="PDBsum" id="2FNJ"/>
<dbReference type="PDBsum" id="2JZ3"/>
<dbReference type="PDBsum" id="4JGH"/>
<dbReference type="BMRB" id="P83940"/>
<dbReference type="SMR" id="P83940"/>
<dbReference type="BioGRID" id="212537">
    <property type="interactions" value="40"/>
</dbReference>
<dbReference type="CORUM" id="P83940"/>
<dbReference type="DIP" id="DIP-42814N"/>
<dbReference type="FunCoup" id="P83940">
    <property type="interactions" value="2420"/>
</dbReference>
<dbReference type="IntAct" id="P83940">
    <property type="interactions" value="19"/>
</dbReference>
<dbReference type="MINT" id="P83940"/>
<dbReference type="STRING" id="10090.ENSMUSP00000139480"/>
<dbReference type="GlyGen" id="P83940">
    <property type="glycosylation" value="1 site, 1 O-linked glycan (1 site)"/>
</dbReference>
<dbReference type="iPTMnet" id="P83940"/>
<dbReference type="PhosphoSitePlus" id="P83940"/>
<dbReference type="SwissPalm" id="P83940"/>
<dbReference type="jPOST" id="P83940"/>
<dbReference type="PaxDb" id="10090-ENSMUSP00000140422"/>
<dbReference type="PeptideAtlas" id="P83940"/>
<dbReference type="ProteomicsDB" id="275452"/>
<dbReference type="Pumba" id="P83940"/>
<dbReference type="Antibodypedia" id="12329">
    <property type="antibodies" value="255 antibodies from 29 providers"/>
</dbReference>
<dbReference type="DNASU" id="67923"/>
<dbReference type="Ensembl" id="ENSMUST00000115352.10">
    <property type="protein sequence ID" value="ENSMUSP00000111009.4"/>
    <property type="gene ID" value="ENSMUSG00000079658.10"/>
</dbReference>
<dbReference type="Ensembl" id="ENSMUST00000185771.7">
    <property type="protein sequence ID" value="ENSMUSP00000139675.2"/>
    <property type="gene ID" value="ENSMUSG00000079658.10"/>
</dbReference>
<dbReference type="Ensembl" id="ENSMUST00000186948.7">
    <property type="protein sequence ID" value="ENSMUSP00000140962.2"/>
    <property type="gene ID" value="ENSMUSG00000079658.10"/>
</dbReference>
<dbReference type="Ensembl" id="ENSMUST00000188641.7">
    <property type="protein sequence ID" value="ENSMUSP00000140422.2"/>
    <property type="gene ID" value="ENSMUSG00000079658.10"/>
</dbReference>
<dbReference type="GeneID" id="67923"/>
<dbReference type="KEGG" id="mmu:67923"/>
<dbReference type="UCSC" id="uc007ajv.1">
    <property type="organism name" value="mouse"/>
</dbReference>
<dbReference type="AGR" id="MGI:1915173"/>
<dbReference type="CTD" id="6921"/>
<dbReference type="MGI" id="MGI:1915173">
    <property type="gene designation" value="Eloc"/>
</dbReference>
<dbReference type="VEuPathDB" id="HostDB:ENSMUSG00000079658"/>
<dbReference type="eggNOG" id="KOG3473">
    <property type="taxonomic scope" value="Eukaryota"/>
</dbReference>
<dbReference type="GeneTree" id="ENSGT00390000011717"/>
<dbReference type="HOGENOM" id="CLU_130038_0_2_1"/>
<dbReference type="InParanoid" id="P83940"/>
<dbReference type="OMA" id="AMVSPII"/>
<dbReference type="OrthoDB" id="249087at2759"/>
<dbReference type="PhylomeDB" id="P83940"/>
<dbReference type="TreeFam" id="TF300233"/>
<dbReference type="Reactome" id="R-MMU-112382">
    <property type="pathway name" value="Formation of RNA Pol II elongation complex"/>
</dbReference>
<dbReference type="Reactome" id="R-MMU-1234176">
    <property type="pathway name" value="Oxygen-dependent proline hydroxylation of Hypoxia-inducible Factor Alpha"/>
</dbReference>
<dbReference type="Reactome" id="R-MMU-674695">
    <property type="pathway name" value="RNA Polymerase II Pre-transcription Events"/>
</dbReference>
<dbReference type="Reactome" id="R-MMU-6796648">
    <property type="pathway name" value="TP53 Regulates Transcription of DNA Repair Genes"/>
</dbReference>
<dbReference type="Reactome" id="R-MMU-75955">
    <property type="pathway name" value="RNA Polymerase II Transcription Elongation"/>
</dbReference>
<dbReference type="Reactome" id="R-MMU-8951664">
    <property type="pathway name" value="Neddylation"/>
</dbReference>
<dbReference type="Reactome" id="R-MMU-9705462">
    <property type="pathway name" value="Inactivation of CSF3 (G-CSF) signaling"/>
</dbReference>
<dbReference type="Reactome" id="R-MMU-983168">
    <property type="pathway name" value="Antigen processing: Ubiquitination &amp; Proteasome degradation"/>
</dbReference>
<dbReference type="UniPathway" id="UPA00143"/>
<dbReference type="BioGRID-ORCS" id="67923">
    <property type="hits" value="26 hits in 70 CRISPR screens"/>
</dbReference>
<dbReference type="ChiTaRS" id="Tceb1">
    <property type="organism name" value="mouse"/>
</dbReference>
<dbReference type="EvolutionaryTrace" id="P83940"/>
<dbReference type="PRO" id="PR:P83940"/>
<dbReference type="Proteomes" id="UP000000589">
    <property type="component" value="Chromosome 1"/>
</dbReference>
<dbReference type="RNAct" id="P83940">
    <property type="molecule type" value="protein"/>
</dbReference>
<dbReference type="Bgee" id="ENSMUSG00000079658">
    <property type="expression patterns" value="Expressed in blastoderm cell in morula and 285 other cell types or tissues"/>
</dbReference>
<dbReference type="ExpressionAtlas" id="P83940">
    <property type="expression patterns" value="baseline and differential"/>
</dbReference>
<dbReference type="GO" id="GO:0031466">
    <property type="term" value="C:Cul5-RING ubiquitin ligase complex"/>
    <property type="evidence" value="ECO:0000314"/>
    <property type="project" value="UniProtKB"/>
</dbReference>
<dbReference type="GO" id="GO:0005829">
    <property type="term" value="C:cytosol"/>
    <property type="evidence" value="ECO:0000304"/>
    <property type="project" value="Reactome"/>
</dbReference>
<dbReference type="GO" id="GO:0070449">
    <property type="term" value="C:elongin complex"/>
    <property type="evidence" value="ECO:0000314"/>
    <property type="project" value="UniProtKB"/>
</dbReference>
<dbReference type="GO" id="GO:0030891">
    <property type="term" value="C:VCB complex"/>
    <property type="evidence" value="ECO:0007669"/>
    <property type="project" value="Ensembl"/>
</dbReference>
<dbReference type="GO" id="GO:0044877">
    <property type="term" value="F:protein-containing complex binding"/>
    <property type="evidence" value="ECO:0007669"/>
    <property type="project" value="Ensembl"/>
</dbReference>
<dbReference type="GO" id="GO:0001222">
    <property type="term" value="F:transcription corepressor binding"/>
    <property type="evidence" value="ECO:0007669"/>
    <property type="project" value="Ensembl"/>
</dbReference>
<dbReference type="GO" id="GO:0032968">
    <property type="term" value="P:positive regulation of transcription elongation by RNA polymerase II"/>
    <property type="evidence" value="ECO:0007669"/>
    <property type="project" value="Ensembl"/>
</dbReference>
<dbReference type="GO" id="GO:0016567">
    <property type="term" value="P:protein ubiquitination"/>
    <property type="evidence" value="ECO:0000250"/>
    <property type="project" value="UniProtKB"/>
</dbReference>
<dbReference type="GO" id="GO:0140958">
    <property type="term" value="P:target-directed miRNA degradation"/>
    <property type="evidence" value="ECO:0007669"/>
    <property type="project" value="Ensembl"/>
</dbReference>
<dbReference type="GO" id="GO:0006367">
    <property type="term" value="P:transcription initiation at RNA polymerase II promoter"/>
    <property type="evidence" value="ECO:0007669"/>
    <property type="project" value="Ensembl"/>
</dbReference>
<dbReference type="GO" id="GO:0006511">
    <property type="term" value="P:ubiquitin-dependent protein catabolic process"/>
    <property type="evidence" value="ECO:0007669"/>
    <property type="project" value="InterPro"/>
</dbReference>
<dbReference type="CDD" id="cd18321">
    <property type="entry name" value="BTB_POZ_EloC"/>
    <property type="match status" value="1"/>
</dbReference>
<dbReference type="FunFam" id="3.30.710.10:FF:000016">
    <property type="entry name" value="Transcription elongation factor"/>
    <property type="match status" value="1"/>
</dbReference>
<dbReference type="Gene3D" id="3.30.710.10">
    <property type="entry name" value="Potassium Channel Kv1.1, Chain A"/>
    <property type="match status" value="1"/>
</dbReference>
<dbReference type="IDEAL" id="IID50219"/>
<dbReference type="InterPro" id="IPR039948">
    <property type="entry name" value="ELC1"/>
</dbReference>
<dbReference type="InterPro" id="IPR001232">
    <property type="entry name" value="SKP1-like"/>
</dbReference>
<dbReference type="InterPro" id="IPR011333">
    <property type="entry name" value="SKP1/BTB/POZ_sf"/>
</dbReference>
<dbReference type="InterPro" id="IPR016073">
    <property type="entry name" value="Skp1_comp_POZ"/>
</dbReference>
<dbReference type="PANTHER" id="PTHR20648">
    <property type="entry name" value="ELONGIN-C"/>
    <property type="match status" value="1"/>
</dbReference>
<dbReference type="Pfam" id="PF03931">
    <property type="entry name" value="Skp1_POZ"/>
    <property type="match status" value="1"/>
</dbReference>
<dbReference type="SMART" id="SM00512">
    <property type="entry name" value="Skp1"/>
    <property type="match status" value="1"/>
</dbReference>
<dbReference type="SUPFAM" id="SSF54695">
    <property type="entry name" value="POZ domain"/>
    <property type="match status" value="1"/>
</dbReference>
<protein>
    <recommendedName>
        <fullName>Elongin-C</fullName>
        <shortName>EloC</shortName>
    </recommendedName>
    <alternativeName>
        <fullName>Elongin 15 kDa subunit</fullName>
    </alternativeName>
    <alternativeName>
        <fullName>RNA polymerase II transcription factor SIII subunit C</fullName>
    </alternativeName>
    <alternativeName>
        <fullName>SIII p15</fullName>
    </alternativeName>
    <alternativeName>
        <fullName>Stromal membrane-associated protein SMAP1B homolog</fullName>
    </alternativeName>
    <alternativeName>
        <fullName>Transcription elongation factor B polypeptide 1</fullName>
    </alternativeName>
</protein>
<name>ELOC_MOUSE</name>
<feature type="chain" id="PRO_0000187259" description="Elongin-C">
    <location>
        <begin position="1"/>
        <end position="112"/>
    </location>
</feature>
<feature type="strand" evidence="13">
    <location>
        <begin position="18"/>
        <end position="22"/>
    </location>
</feature>
<feature type="strand" evidence="13">
    <location>
        <begin position="28"/>
        <end position="32"/>
    </location>
</feature>
<feature type="helix" evidence="13">
    <location>
        <begin position="33"/>
        <end position="36"/>
    </location>
</feature>
<feature type="helix" evidence="14">
    <location>
        <begin position="37"/>
        <end position="39"/>
    </location>
</feature>
<feature type="helix" evidence="13">
    <location>
        <begin position="40"/>
        <end position="47"/>
    </location>
</feature>
<feature type="helix" evidence="15">
    <location>
        <begin position="48"/>
        <end position="50"/>
    </location>
</feature>
<feature type="strand" evidence="15">
    <location>
        <begin position="54"/>
        <end position="56"/>
    </location>
</feature>
<feature type="strand" evidence="13">
    <location>
        <begin position="59"/>
        <end position="61"/>
    </location>
</feature>
<feature type="helix" evidence="13">
    <location>
        <begin position="67"/>
        <end position="84"/>
    </location>
</feature>
<feature type="strand" evidence="15">
    <location>
        <begin position="85"/>
        <end position="89"/>
    </location>
</feature>
<feature type="turn" evidence="13">
    <location>
        <begin position="97"/>
        <end position="99"/>
    </location>
</feature>
<feature type="helix" evidence="13">
    <location>
        <begin position="100"/>
        <end position="110"/>
    </location>
</feature>
<organism>
    <name type="scientific">Mus musculus</name>
    <name type="common">Mouse</name>
    <dbReference type="NCBI Taxonomy" id="10090"/>
    <lineage>
        <taxon>Eukaryota</taxon>
        <taxon>Metazoa</taxon>
        <taxon>Chordata</taxon>
        <taxon>Craniata</taxon>
        <taxon>Vertebrata</taxon>
        <taxon>Euteleostomi</taxon>
        <taxon>Mammalia</taxon>
        <taxon>Eutheria</taxon>
        <taxon>Euarchontoglires</taxon>
        <taxon>Glires</taxon>
        <taxon>Rodentia</taxon>
        <taxon>Myomorpha</taxon>
        <taxon>Muroidea</taxon>
        <taxon>Muridae</taxon>
        <taxon>Murinae</taxon>
        <taxon>Mus</taxon>
        <taxon>Mus</taxon>
    </lineage>
</organism>